<feature type="signal peptide" evidence="2">
    <location>
        <begin position="1"/>
        <end position="16"/>
    </location>
</feature>
<feature type="chain" id="PRO_0000333412" description="Protein ROT1">
    <location>
        <begin position="17"/>
        <end position="241"/>
    </location>
</feature>
<feature type="topological domain" description="Lumenal" evidence="2">
    <location>
        <begin position="17"/>
        <end position="222"/>
    </location>
</feature>
<feature type="transmembrane region" description="Helical" evidence="2">
    <location>
        <begin position="223"/>
        <end position="240"/>
    </location>
</feature>
<feature type="topological domain" description="Cytoplasmic" evidence="2">
    <location>
        <position position="241"/>
    </location>
</feature>
<keyword id="KW-0256">Endoplasmic reticulum</keyword>
<keyword id="KW-0472">Membrane</keyword>
<keyword id="KW-1185">Reference proteome</keyword>
<keyword id="KW-0732">Signal</keyword>
<keyword id="KW-0812">Transmembrane</keyword>
<keyword id="KW-1133">Transmembrane helix</keyword>
<reference key="1">
    <citation type="journal article" date="2004" name="Nature">
        <title>Genome evolution in yeasts.</title>
        <authorList>
            <person name="Dujon B."/>
            <person name="Sherman D."/>
            <person name="Fischer G."/>
            <person name="Durrens P."/>
            <person name="Casaregola S."/>
            <person name="Lafontaine I."/>
            <person name="de Montigny J."/>
            <person name="Marck C."/>
            <person name="Neuveglise C."/>
            <person name="Talla E."/>
            <person name="Goffard N."/>
            <person name="Frangeul L."/>
            <person name="Aigle M."/>
            <person name="Anthouard V."/>
            <person name="Babour A."/>
            <person name="Barbe V."/>
            <person name="Barnay S."/>
            <person name="Blanchin S."/>
            <person name="Beckerich J.-M."/>
            <person name="Beyne E."/>
            <person name="Bleykasten C."/>
            <person name="Boisrame A."/>
            <person name="Boyer J."/>
            <person name="Cattolico L."/>
            <person name="Confanioleri F."/>
            <person name="de Daruvar A."/>
            <person name="Despons L."/>
            <person name="Fabre E."/>
            <person name="Fairhead C."/>
            <person name="Ferry-Dumazet H."/>
            <person name="Groppi A."/>
            <person name="Hantraye F."/>
            <person name="Hennequin C."/>
            <person name="Jauniaux N."/>
            <person name="Joyet P."/>
            <person name="Kachouri R."/>
            <person name="Kerrest A."/>
            <person name="Koszul R."/>
            <person name="Lemaire M."/>
            <person name="Lesur I."/>
            <person name="Ma L."/>
            <person name="Muller H."/>
            <person name="Nicaud J.-M."/>
            <person name="Nikolski M."/>
            <person name="Oztas S."/>
            <person name="Ozier-Kalogeropoulos O."/>
            <person name="Pellenz S."/>
            <person name="Potier S."/>
            <person name="Richard G.-F."/>
            <person name="Straub M.-L."/>
            <person name="Suleau A."/>
            <person name="Swennen D."/>
            <person name="Tekaia F."/>
            <person name="Wesolowski-Louvel M."/>
            <person name="Westhof E."/>
            <person name="Wirth B."/>
            <person name="Zeniou-Meyer M."/>
            <person name="Zivanovic Y."/>
            <person name="Bolotin-Fukuhara M."/>
            <person name="Thierry A."/>
            <person name="Bouchier C."/>
            <person name="Caudron B."/>
            <person name="Scarpelli C."/>
            <person name="Gaillardin C."/>
            <person name="Weissenbach J."/>
            <person name="Wincker P."/>
            <person name="Souciet J.-L."/>
        </authorList>
    </citation>
    <scope>NUCLEOTIDE SEQUENCE [LARGE SCALE GENOMIC DNA]</scope>
    <source>
        <strain>ATCC 8585 / CBS 2359 / DSM 70799 / NBRC 1267 / NRRL Y-1140 / WM37</strain>
    </source>
</reference>
<accession>Q6CL16</accession>
<comment type="function">
    <text evidence="1">Required for normal levels of the cell wall 1,6-beta-glucan. Involved in a protein folding machinery chaperoning proteins acting in various physiological processes including cell wall synthesis and lysis of autophagic bodies (By similarity).</text>
</comment>
<comment type="subcellular location">
    <subcellularLocation>
        <location evidence="1">Endoplasmic reticulum membrane</location>
        <topology evidence="1">Single-pass type I membrane protein</topology>
    </subcellularLocation>
</comment>
<comment type="similarity">
    <text evidence="3">Belongs to the ROT1 family.</text>
</comment>
<name>ROT1_KLULA</name>
<protein>
    <recommendedName>
        <fullName>Protein ROT1</fullName>
    </recommendedName>
</protein>
<evidence type="ECO:0000250" key="1"/>
<evidence type="ECO:0000255" key="2"/>
<evidence type="ECO:0000305" key="3"/>
<proteinExistence type="inferred from homology"/>
<gene>
    <name type="primary">ROT1</name>
    <name type="ordered locus">KLLA0F06468g</name>
</gene>
<organism>
    <name type="scientific">Kluyveromyces lactis (strain ATCC 8585 / CBS 2359 / DSM 70799 / NBRC 1267 / NRRL Y-1140 / WM37)</name>
    <name type="common">Yeast</name>
    <name type="synonym">Candida sphaerica</name>
    <dbReference type="NCBI Taxonomy" id="284590"/>
    <lineage>
        <taxon>Eukaryota</taxon>
        <taxon>Fungi</taxon>
        <taxon>Dikarya</taxon>
        <taxon>Ascomycota</taxon>
        <taxon>Saccharomycotina</taxon>
        <taxon>Saccharomycetes</taxon>
        <taxon>Saccharomycetales</taxon>
        <taxon>Saccharomycetaceae</taxon>
        <taxon>Kluyveromyces</taxon>
    </lineage>
</organism>
<sequence length="241" mass="26626">MRVLIPLSLFAVAVSGQNSDLEGTWSSKSNQVFTGPGFYDPIEELLIEPALPGISYSFTADGYFEEAMYQVSGNPQDPKCPVAVLIFQHGTYEVKDDGQLVLTPIEVDGRQLLSQPCDDEGVSTYSRYYQAESFKSYLVQLDTYYGKQSLQLYGSDGAPLQPLFLAYKPPVMLPTITLNPTASDDAQPTSNAKRDLISHVRRSIENRHKTNAVKKTAPNIEKYWWGSLALIGVGSIAFLLS</sequence>
<dbReference type="EMBL" id="CR382126">
    <property type="protein sequence ID" value="CAG98081.1"/>
    <property type="molecule type" value="Genomic_DNA"/>
</dbReference>
<dbReference type="RefSeq" id="XP_455373.1">
    <property type="nucleotide sequence ID" value="XM_455373.1"/>
</dbReference>
<dbReference type="FunCoup" id="Q6CL16">
    <property type="interactions" value="38"/>
</dbReference>
<dbReference type="STRING" id="284590.Q6CL16"/>
<dbReference type="PaxDb" id="284590-Q6CL16"/>
<dbReference type="KEGG" id="kla:KLLA0_F06468g"/>
<dbReference type="eggNOG" id="ENOG502QQTG">
    <property type="taxonomic scope" value="Eukaryota"/>
</dbReference>
<dbReference type="HOGENOM" id="CLU_071622_0_0_1"/>
<dbReference type="InParanoid" id="Q6CL16"/>
<dbReference type="OMA" id="YKPPQML"/>
<dbReference type="Proteomes" id="UP000000598">
    <property type="component" value="Chromosome F"/>
</dbReference>
<dbReference type="GO" id="GO:0005789">
    <property type="term" value="C:endoplasmic reticulum membrane"/>
    <property type="evidence" value="ECO:0007669"/>
    <property type="project" value="UniProtKB-SubCell"/>
</dbReference>
<dbReference type="GO" id="GO:0051082">
    <property type="term" value="F:unfolded protein binding"/>
    <property type="evidence" value="ECO:0007669"/>
    <property type="project" value="TreeGrafter"/>
</dbReference>
<dbReference type="GO" id="GO:0006458">
    <property type="term" value="P:'de novo' protein folding"/>
    <property type="evidence" value="ECO:0007669"/>
    <property type="project" value="InterPro"/>
</dbReference>
<dbReference type="GO" id="GO:0007118">
    <property type="term" value="P:budding cell apical bud growth"/>
    <property type="evidence" value="ECO:0007669"/>
    <property type="project" value="TreeGrafter"/>
</dbReference>
<dbReference type="InterPro" id="IPR019623">
    <property type="entry name" value="Rot1"/>
</dbReference>
<dbReference type="PANTHER" id="PTHR28090">
    <property type="entry name" value="PROTEIN ROT1"/>
    <property type="match status" value="1"/>
</dbReference>
<dbReference type="PANTHER" id="PTHR28090:SF1">
    <property type="entry name" value="PROTEIN ROT1"/>
    <property type="match status" value="1"/>
</dbReference>
<dbReference type="Pfam" id="PF10681">
    <property type="entry name" value="Rot1"/>
    <property type="match status" value="1"/>
</dbReference>
<dbReference type="PIRSF" id="PIRSF017290">
    <property type="entry name" value="ROT1_prd"/>
    <property type="match status" value="1"/>
</dbReference>